<keyword id="KW-0028">Amino-acid biosynthesis</keyword>
<keyword id="KW-0055">Arginine biosynthesis</keyword>
<keyword id="KW-0963">Cytoplasm</keyword>
<keyword id="KW-0238">DNA-binding</keyword>
<keyword id="KW-0678">Repressor</keyword>
<keyword id="KW-0804">Transcription</keyword>
<keyword id="KW-0805">Transcription regulation</keyword>
<comment type="function">
    <text evidence="1">Regulates arginine biosynthesis genes.</text>
</comment>
<comment type="pathway">
    <text>Amino-acid biosynthesis; L-arginine biosynthesis [regulation].</text>
</comment>
<comment type="subcellular location">
    <subcellularLocation>
        <location evidence="1">Cytoplasm</location>
    </subcellularLocation>
</comment>
<comment type="similarity">
    <text evidence="1">Belongs to the ArgR family.</text>
</comment>
<proteinExistence type="inferred from homology"/>
<name>ARGR_LACDB</name>
<evidence type="ECO:0000255" key="1">
    <source>
        <dbReference type="HAMAP-Rule" id="MF_00173"/>
    </source>
</evidence>
<dbReference type="EMBL" id="CP000412">
    <property type="protein sequence ID" value="ABJ58355.1"/>
    <property type="molecule type" value="Genomic_DNA"/>
</dbReference>
<dbReference type="RefSeq" id="WP_002879191.1">
    <property type="nucleotide sequence ID" value="NC_008529.1"/>
</dbReference>
<dbReference type="SMR" id="Q04B17"/>
<dbReference type="KEGG" id="lbu:LBUL_0740"/>
<dbReference type="HOGENOM" id="CLU_097103_3_0_9"/>
<dbReference type="BioCyc" id="LDEL321956:LBUL_RS03525-MONOMER"/>
<dbReference type="UniPathway" id="UPA00068"/>
<dbReference type="GO" id="GO:0005737">
    <property type="term" value="C:cytoplasm"/>
    <property type="evidence" value="ECO:0007669"/>
    <property type="project" value="UniProtKB-SubCell"/>
</dbReference>
<dbReference type="GO" id="GO:0034618">
    <property type="term" value="F:arginine binding"/>
    <property type="evidence" value="ECO:0007669"/>
    <property type="project" value="InterPro"/>
</dbReference>
<dbReference type="GO" id="GO:0003677">
    <property type="term" value="F:DNA binding"/>
    <property type="evidence" value="ECO:0007669"/>
    <property type="project" value="UniProtKB-KW"/>
</dbReference>
<dbReference type="GO" id="GO:0003700">
    <property type="term" value="F:DNA-binding transcription factor activity"/>
    <property type="evidence" value="ECO:0007669"/>
    <property type="project" value="UniProtKB-UniRule"/>
</dbReference>
<dbReference type="GO" id="GO:0006526">
    <property type="term" value="P:L-arginine biosynthetic process"/>
    <property type="evidence" value="ECO:0007669"/>
    <property type="project" value="UniProtKB-UniPathway"/>
</dbReference>
<dbReference type="GO" id="GO:0051259">
    <property type="term" value="P:protein complex oligomerization"/>
    <property type="evidence" value="ECO:0007669"/>
    <property type="project" value="InterPro"/>
</dbReference>
<dbReference type="GO" id="GO:1900079">
    <property type="term" value="P:regulation of arginine biosynthetic process"/>
    <property type="evidence" value="ECO:0007669"/>
    <property type="project" value="UniProtKB-UniRule"/>
</dbReference>
<dbReference type="Gene3D" id="3.30.1360.40">
    <property type="match status" value="1"/>
</dbReference>
<dbReference type="Gene3D" id="1.10.10.10">
    <property type="entry name" value="Winged helix-like DNA-binding domain superfamily/Winged helix DNA-binding domain"/>
    <property type="match status" value="1"/>
</dbReference>
<dbReference type="HAMAP" id="MF_00173">
    <property type="entry name" value="Arg_repressor"/>
    <property type="match status" value="1"/>
</dbReference>
<dbReference type="InterPro" id="IPR001669">
    <property type="entry name" value="Arg_repress"/>
</dbReference>
<dbReference type="InterPro" id="IPR020899">
    <property type="entry name" value="Arg_repress_C"/>
</dbReference>
<dbReference type="InterPro" id="IPR036251">
    <property type="entry name" value="Arg_repress_C_sf"/>
</dbReference>
<dbReference type="InterPro" id="IPR020900">
    <property type="entry name" value="Arg_repress_DNA-bd"/>
</dbReference>
<dbReference type="InterPro" id="IPR036388">
    <property type="entry name" value="WH-like_DNA-bd_sf"/>
</dbReference>
<dbReference type="InterPro" id="IPR036390">
    <property type="entry name" value="WH_DNA-bd_sf"/>
</dbReference>
<dbReference type="PANTHER" id="PTHR34471">
    <property type="entry name" value="ARGININE REPRESSOR"/>
    <property type="match status" value="1"/>
</dbReference>
<dbReference type="PANTHER" id="PTHR34471:SF1">
    <property type="entry name" value="ARGININE REPRESSOR"/>
    <property type="match status" value="1"/>
</dbReference>
<dbReference type="Pfam" id="PF01316">
    <property type="entry name" value="Arg_repressor"/>
    <property type="match status" value="1"/>
</dbReference>
<dbReference type="Pfam" id="PF02863">
    <property type="entry name" value="Arg_repressor_C"/>
    <property type="match status" value="1"/>
</dbReference>
<dbReference type="PRINTS" id="PR01467">
    <property type="entry name" value="ARGREPRESSOR"/>
</dbReference>
<dbReference type="SUPFAM" id="SSF55252">
    <property type="entry name" value="C-terminal domain of arginine repressor"/>
    <property type="match status" value="1"/>
</dbReference>
<dbReference type="SUPFAM" id="SSF46785">
    <property type="entry name" value="Winged helix' DNA-binding domain"/>
    <property type="match status" value="1"/>
</dbReference>
<accession>Q04B17</accession>
<gene>
    <name evidence="1" type="primary">argR</name>
    <name type="ordered locus">LBUL_0740</name>
</gene>
<reference key="1">
    <citation type="journal article" date="2006" name="Proc. Natl. Acad. Sci. U.S.A.">
        <title>Comparative genomics of the lactic acid bacteria.</title>
        <authorList>
            <person name="Makarova K.S."/>
            <person name="Slesarev A."/>
            <person name="Wolf Y.I."/>
            <person name="Sorokin A."/>
            <person name="Mirkin B."/>
            <person name="Koonin E.V."/>
            <person name="Pavlov A."/>
            <person name="Pavlova N."/>
            <person name="Karamychev V."/>
            <person name="Polouchine N."/>
            <person name="Shakhova V."/>
            <person name="Grigoriev I."/>
            <person name="Lou Y."/>
            <person name="Rohksar D."/>
            <person name="Lucas S."/>
            <person name="Huang K."/>
            <person name="Goodstein D.M."/>
            <person name="Hawkins T."/>
            <person name="Plengvidhya V."/>
            <person name="Welker D."/>
            <person name="Hughes J."/>
            <person name="Goh Y."/>
            <person name="Benson A."/>
            <person name="Baldwin K."/>
            <person name="Lee J.-H."/>
            <person name="Diaz-Muniz I."/>
            <person name="Dosti B."/>
            <person name="Smeianov V."/>
            <person name="Wechter W."/>
            <person name="Barabote R."/>
            <person name="Lorca G."/>
            <person name="Altermann E."/>
            <person name="Barrangou R."/>
            <person name="Ganesan B."/>
            <person name="Xie Y."/>
            <person name="Rawsthorne H."/>
            <person name="Tamir D."/>
            <person name="Parker C."/>
            <person name="Breidt F."/>
            <person name="Broadbent J.R."/>
            <person name="Hutkins R."/>
            <person name="O'Sullivan D."/>
            <person name="Steele J."/>
            <person name="Unlu G."/>
            <person name="Saier M.H. Jr."/>
            <person name="Klaenhammer T."/>
            <person name="Richardson P."/>
            <person name="Kozyavkin S."/>
            <person name="Weimer B.C."/>
            <person name="Mills D.A."/>
        </authorList>
    </citation>
    <scope>NUCLEOTIDE SEQUENCE [LARGE SCALE GENOMIC DNA]</scope>
    <source>
        <strain>ATCC BAA-365 / Lb-18</strain>
    </source>
</reference>
<organism>
    <name type="scientific">Lactobacillus delbrueckii subsp. bulgaricus (strain ATCC BAA-365 / Lb-18)</name>
    <dbReference type="NCBI Taxonomy" id="321956"/>
    <lineage>
        <taxon>Bacteria</taxon>
        <taxon>Bacillati</taxon>
        <taxon>Bacillota</taxon>
        <taxon>Bacilli</taxon>
        <taxon>Lactobacillales</taxon>
        <taxon>Lactobacillaceae</taxon>
        <taxon>Lactobacillus</taxon>
    </lineage>
</organism>
<sequence length="157" mass="17500">MNYKERRQLIYELIQTNKIETQEQLLLLLQAHGANATQATISRDIRALHISKVPDDDGRSYYVKAPSAAVNRERQLKDAIRERVATVTAVQFTVVIQTSMKLTYAPILAGLIDDIDNDDVVGTIAGTDTLLVILKDAEAAASFADWAQAIVKERKIY</sequence>
<feature type="chain" id="PRO_1000023574" description="Arginine repressor">
    <location>
        <begin position="1"/>
        <end position="157"/>
    </location>
</feature>
<protein>
    <recommendedName>
        <fullName evidence="1">Arginine repressor</fullName>
    </recommendedName>
</protein>